<protein>
    <recommendedName>
        <fullName>Hepatocyte growth factor receptor</fullName>
        <shortName>HGF receptor</shortName>
        <ecNumber>2.7.10.1</ecNumber>
    </recommendedName>
    <alternativeName>
        <fullName>HGF/SF receptor</fullName>
    </alternativeName>
    <alternativeName>
        <fullName>Proto-oncogene c-Met</fullName>
    </alternativeName>
    <alternativeName>
        <fullName>Scatter factor receptor</fullName>
        <shortName>SF receptor</shortName>
    </alternativeName>
    <alternativeName>
        <fullName>Tyrosine-protein kinase Met</fullName>
    </alternativeName>
</protein>
<accession>Q07E01</accession>
<gene>
    <name type="primary">MET</name>
</gene>
<dbReference type="EC" id="2.7.10.1"/>
<dbReference type="EMBL" id="DP000185">
    <property type="protein sequence ID" value="ABI93675.1"/>
    <property type="molecule type" value="Genomic_DNA"/>
</dbReference>
<dbReference type="RefSeq" id="NP_001229665.1">
    <property type="nucleotide sequence ID" value="NM_001242736.1"/>
</dbReference>
<dbReference type="SMR" id="Q07E01"/>
<dbReference type="FunCoup" id="Q07E01">
    <property type="interactions" value="903"/>
</dbReference>
<dbReference type="STRING" id="9258.ENSOANP00000023659"/>
<dbReference type="GlyCosmos" id="Q07E01">
    <property type="glycosylation" value="16 sites, No reported glycans"/>
</dbReference>
<dbReference type="GeneID" id="100079345"/>
<dbReference type="KEGG" id="oaa:100079345"/>
<dbReference type="CTD" id="4233"/>
<dbReference type="eggNOG" id="KOG1095">
    <property type="taxonomic scope" value="Eukaryota"/>
</dbReference>
<dbReference type="eggNOG" id="KOG3610">
    <property type="taxonomic scope" value="Eukaryota"/>
</dbReference>
<dbReference type="InParanoid" id="Q07E01"/>
<dbReference type="OrthoDB" id="9985181at2759"/>
<dbReference type="Proteomes" id="UP000002279">
    <property type="component" value="Unplaced"/>
</dbReference>
<dbReference type="GO" id="GO:0009925">
    <property type="term" value="C:basal plasma membrane"/>
    <property type="evidence" value="ECO:0000318"/>
    <property type="project" value="GO_Central"/>
</dbReference>
<dbReference type="GO" id="GO:0005886">
    <property type="term" value="C:plasma membrane"/>
    <property type="evidence" value="ECO:0000318"/>
    <property type="project" value="GO_Central"/>
</dbReference>
<dbReference type="GO" id="GO:0043235">
    <property type="term" value="C:receptor complex"/>
    <property type="evidence" value="ECO:0000318"/>
    <property type="project" value="GO_Central"/>
</dbReference>
<dbReference type="GO" id="GO:0005524">
    <property type="term" value="F:ATP binding"/>
    <property type="evidence" value="ECO:0007669"/>
    <property type="project" value="UniProtKB-KW"/>
</dbReference>
<dbReference type="GO" id="GO:0005008">
    <property type="term" value="F:hepatocyte growth factor receptor activity"/>
    <property type="evidence" value="ECO:0000318"/>
    <property type="project" value="GO_Central"/>
</dbReference>
<dbReference type="GO" id="GO:0017154">
    <property type="term" value="F:semaphorin receptor activity"/>
    <property type="evidence" value="ECO:0007669"/>
    <property type="project" value="InterPro"/>
</dbReference>
<dbReference type="GO" id="GO:0007169">
    <property type="term" value="P:cell surface receptor protein tyrosine kinase signaling pathway"/>
    <property type="evidence" value="ECO:0000318"/>
    <property type="project" value="GO_Central"/>
</dbReference>
<dbReference type="GO" id="GO:0001889">
    <property type="term" value="P:liver development"/>
    <property type="evidence" value="ECO:0000318"/>
    <property type="project" value="GO_Central"/>
</dbReference>
<dbReference type="GO" id="GO:0030182">
    <property type="term" value="P:neuron differentiation"/>
    <property type="evidence" value="ECO:0000318"/>
    <property type="project" value="GO_Central"/>
</dbReference>
<dbReference type="GO" id="GO:0031016">
    <property type="term" value="P:pancreas development"/>
    <property type="evidence" value="ECO:0000318"/>
    <property type="project" value="GO_Central"/>
</dbReference>
<dbReference type="GO" id="GO:0050918">
    <property type="term" value="P:positive chemotaxis"/>
    <property type="evidence" value="ECO:0000250"/>
    <property type="project" value="UniProtKB"/>
</dbReference>
<dbReference type="GO" id="GO:2001028">
    <property type="term" value="P:positive regulation of endothelial cell chemotaxis"/>
    <property type="evidence" value="ECO:0000250"/>
    <property type="project" value="UniProtKB"/>
</dbReference>
<dbReference type="GO" id="GO:0071526">
    <property type="term" value="P:semaphorin-plexin signaling pathway"/>
    <property type="evidence" value="ECO:0000250"/>
    <property type="project" value="UniProtKB"/>
</dbReference>
<dbReference type="CDD" id="cd00603">
    <property type="entry name" value="IPT_PCSR"/>
    <property type="match status" value="1"/>
</dbReference>
<dbReference type="CDD" id="cd01179">
    <property type="entry name" value="IPT_plexin_repeat2"/>
    <property type="match status" value="1"/>
</dbReference>
<dbReference type="CDD" id="cd05058">
    <property type="entry name" value="PTKc_Met_Ron"/>
    <property type="match status" value="1"/>
</dbReference>
<dbReference type="FunFam" id="1.10.510.10:FF:000093">
    <property type="entry name" value="Hepatocyte growth factor receptor"/>
    <property type="match status" value="1"/>
</dbReference>
<dbReference type="FunFam" id="2.130.10.10:FF:000088">
    <property type="entry name" value="Hepatocyte growth factor receptor"/>
    <property type="match status" value="1"/>
</dbReference>
<dbReference type="FunFam" id="2.60.40.10:FF:000213">
    <property type="entry name" value="Hepatocyte growth factor receptor"/>
    <property type="match status" value="1"/>
</dbReference>
<dbReference type="FunFam" id="2.60.40.10:FF:000400">
    <property type="entry name" value="Hepatocyte growth factor receptor"/>
    <property type="match status" value="1"/>
</dbReference>
<dbReference type="FunFam" id="2.60.40.10:FF:002708">
    <property type="entry name" value="Hepatocyte growth factor receptor"/>
    <property type="match status" value="1"/>
</dbReference>
<dbReference type="FunFam" id="3.30.200.20:FF:000188">
    <property type="entry name" value="Hepatocyte growth factor receptor"/>
    <property type="match status" value="1"/>
</dbReference>
<dbReference type="FunFam" id="3.30.1680.10:FF:000006">
    <property type="entry name" value="Macrophage-stimulating 1 receptor b"/>
    <property type="match status" value="1"/>
</dbReference>
<dbReference type="Gene3D" id="2.60.40.10">
    <property type="entry name" value="Immunoglobulins"/>
    <property type="match status" value="3"/>
</dbReference>
<dbReference type="Gene3D" id="3.30.200.20">
    <property type="entry name" value="Phosphorylase Kinase, domain 1"/>
    <property type="match status" value="1"/>
</dbReference>
<dbReference type="Gene3D" id="1.10.510.10">
    <property type="entry name" value="Transferase(Phosphotransferase) domain 1"/>
    <property type="match status" value="1"/>
</dbReference>
<dbReference type="Gene3D" id="2.130.10.10">
    <property type="entry name" value="YVTN repeat-like/Quinoprotein amine dehydrogenase"/>
    <property type="match status" value="1"/>
</dbReference>
<dbReference type="InterPro" id="IPR013783">
    <property type="entry name" value="Ig-like_fold"/>
</dbReference>
<dbReference type="InterPro" id="IPR014756">
    <property type="entry name" value="Ig_E-set"/>
</dbReference>
<dbReference type="InterPro" id="IPR002909">
    <property type="entry name" value="IPT_dom"/>
</dbReference>
<dbReference type="InterPro" id="IPR011009">
    <property type="entry name" value="Kinase-like_dom_sf"/>
</dbReference>
<dbReference type="InterPro" id="IPR031148">
    <property type="entry name" value="Plexin"/>
</dbReference>
<dbReference type="InterPro" id="IPR002165">
    <property type="entry name" value="Plexin_repeat"/>
</dbReference>
<dbReference type="InterPro" id="IPR000719">
    <property type="entry name" value="Prot_kinase_dom"/>
</dbReference>
<dbReference type="InterPro" id="IPR017441">
    <property type="entry name" value="Protein_kinase_ATP_BS"/>
</dbReference>
<dbReference type="InterPro" id="IPR016201">
    <property type="entry name" value="PSI"/>
</dbReference>
<dbReference type="InterPro" id="IPR001627">
    <property type="entry name" value="Semap_dom"/>
</dbReference>
<dbReference type="InterPro" id="IPR036352">
    <property type="entry name" value="Semap_dom_sf"/>
</dbReference>
<dbReference type="InterPro" id="IPR001245">
    <property type="entry name" value="Ser-Thr/Tyr_kinase_cat_dom"/>
</dbReference>
<dbReference type="InterPro" id="IPR008266">
    <property type="entry name" value="Tyr_kinase_AS"/>
</dbReference>
<dbReference type="InterPro" id="IPR020635">
    <property type="entry name" value="Tyr_kinase_cat_dom"/>
</dbReference>
<dbReference type="InterPro" id="IPR016244">
    <property type="entry name" value="Tyr_kinase_HGF/MSP_rcpt"/>
</dbReference>
<dbReference type="InterPro" id="IPR015943">
    <property type="entry name" value="WD40/YVTN_repeat-like_dom_sf"/>
</dbReference>
<dbReference type="PANTHER" id="PTHR22625:SF61">
    <property type="entry name" value="HEPATOCYTE GROWTH FACTOR RECEPTOR"/>
    <property type="match status" value="1"/>
</dbReference>
<dbReference type="PANTHER" id="PTHR22625">
    <property type="entry name" value="PLEXIN"/>
    <property type="match status" value="1"/>
</dbReference>
<dbReference type="Pfam" id="PF07714">
    <property type="entry name" value="PK_Tyr_Ser-Thr"/>
    <property type="match status" value="1"/>
</dbReference>
<dbReference type="Pfam" id="PF01437">
    <property type="entry name" value="PSI"/>
    <property type="match status" value="1"/>
</dbReference>
<dbReference type="Pfam" id="PF01403">
    <property type="entry name" value="Sema"/>
    <property type="match status" value="1"/>
</dbReference>
<dbReference type="Pfam" id="PF01833">
    <property type="entry name" value="TIG"/>
    <property type="match status" value="3"/>
</dbReference>
<dbReference type="PIRSF" id="PIRSF000617">
    <property type="entry name" value="TyrPK_HGF-R"/>
    <property type="match status" value="1"/>
</dbReference>
<dbReference type="PRINTS" id="PR00109">
    <property type="entry name" value="TYRKINASE"/>
</dbReference>
<dbReference type="SMART" id="SM00429">
    <property type="entry name" value="IPT"/>
    <property type="match status" value="4"/>
</dbReference>
<dbReference type="SMART" id="SM00423">
    <property type="entry name" value="PSI"/>
    <property type="match status" value="1"/>
</dbReference>
<dbReference type="SMART" id="SM00630">
    <property type="entry name" value="Sema"/>
    <property type="match status" value="1"/>
</dbReference>
<dbReference type="SMART" id="SM00219">
    <property type="entry name" value="TyrKc"/>
    <property type="match status" value="1"/>
</dbReference>
<dbReference type="SUPFAM" id="SSF81296">
    <property type="entry name" value="E set domains"/>
    <property type="match status" value="3"/>
</dbReference>
<dbReference type="SUPFAM" id="SSF103575">
    <property type="entry name" value="Plexin repeat"/>
    <property type="match status" value="1"/>
</dbReference>
<dbReference type="SUPFAM" id="SSF56112">
    <property type="entry name" value="Protein kinase-like (PK-like)"/>
    <property type="match status" value="1"/>
</dbReference>
<dbReference type="SUPFAM" id="SSF101912">
    <property type="entry name" value="Sema domain"/>
    <property type="match status" value="1"/>
</dbReference>
<dbReference type="PROSITE" id="PS00107">
    <property type="entry name" value="PROTEIN_KINASE_ATP"/>
    <property type="match status" value="1"/>
</dbReference>
<dbReference type="PROSITE" id="PS50011">
    <property type="entry name" value="PROTEIN_KINASE_DOM"/>
    <property type="match status" value="1"/>
</dbReference>
<dbReference type="PROSITE" id="PS00109">
    <property type="entry name" value="PROTEIN_KINASE_TYR"/>
    <property type="match status" value="1"/>
</dbReference>
<dbReference type="PROSITE" id="PS51004">
    <property type="entry name" value="SEMA"/>
    <property type="match status" value="1"/>
</dbReference>
<keyword id="KW-0067">ATP-binding</keyword>
<keyword id="KW-1015">Disulfide bond</keyword>
<keyword id="KW-0325">Glycoprotein</keyword>
<keyword id="KW-0418">Kinase</keyword>
<keyword id="KW-0472">Membrane</keyword>
<keyword id="KW-0547">Nucleotide-binding</keyword>
<keyword id="KW-0597">Phosphoprotein</keyword>
<keyword id="KW-0656">Proto-oncogene</keyword>
<keyword id="KW-0675">Receptor</keyword>
<keyword id="KW-1185">Reference proteome</keyword>
<keyword id="KW-0677">Repeat</keyword>
<keyword id="KW-0732">Signal</keyword>
<keyword id="KW-0808">Transferase</keyword>
<keyword id="KW-0812">Transmembrane</keyword>
<keyword id="KW-1133">Transmembrane helix</keyword>
<keyword id="KW-0829">Tyrosine-protein kinase</keyword>
<keyword id="KW-0832">Ubl conjugation</keyword>
<proteinExistence type="inferred from homology"/>
<evidence type="ECO:0000250" key="1"/>
<evidence type="ECO:0000250" key="2">
    <source>
        <dbReference type="UniProtKB" id="P08581"/>
    </source>
</evidence>
<evidence type="ECO:0000250" key="3">
    <source>
        <dbReference type="UniProtKB" id="P16056"/>
    </source>
</evidence>
<evidence type="ECO:0000255" key="4"/>
<evidence type="ECO:0000255" key="5">
    <source>
        <dbReference type="PROSITE-ProRule" id="PRU00159"/>
    </source>
</evidence>
<evidence type="ECO:0000255" key="6">
    <source>
        <dbReference type="PROSITE-ProRule" id="PRU00352"/>
    </source>
</evidence>
<evidence type="ECO:0000255" key="7">
    <source>
        <dbReference type="PROSITE-ProRule" id="PRU10028"/>
    </source>
</evidence>
<name>MET_ORNAN</name>
<sequence>MKPPTVHIPGIVVLLFTLVQRSSEECREALRRSGTDVNVSYSLPHFIANTTLLNIVVHRDDLYLGAVNKIYVLDKNLQDFVEYPTGPVLEHPDCAPCENCSAIAHSSKADLRDNVNMALLIETYYHYEQLIICGSVDGGACWRFPLPLGEPTDFHSKKHCMFSHQADEESKDCPDCIVSTLGTKVLLVEKDRFVNFFVGNTINSSSHPFSSLHSISVRRLKETLDGFKFLTDQSYIDVLPQFRDSYPIKYIHAFESNQFIYFLTVQKETVESQTFHTRIIRFCSMDSELHSYMEMPLECILTEKRRRRSTNKEVFNVLQAAYVSKPGAHLARQIGTGLNDDILYGVFAQSKPDSAEPMNRSAICAFPIKYINEFFSKIVNKNNVRCLQHFYGNHHRHCANRTFQWNSSGCEVRDDEYRMEFTTPLQRVDLSMGKFSHVLLTSISTFIKGNLTVANLGTAEGRFMQVVISRSDPPSPHVDFLLDNHPVSPEVIVVNSSMPDGYTLVITGKKITKIPLNGLGCDHFKSCRQCLSAPSFVQCGWCDDRCTTAEKCDYGLWTQDTCPPTIFEIIPSSAPLEGGTMLTVCGWDFGFQKNNKFELRKTKVLVGNQSCTLFFNESSTNKLKCTAGPSTQPRLNISISVSNAQGGRRSKTFSYVDPKITSISPRYGPIAGGTLLTLTGKYLNCGSSRHISIGGKTCTLRSVSEHVLECYTPSQTVPTLYAVKMKIDLANREAGTFIYKEDPVIHEIHPTKSFLSGGSTITGFGKNLNGSSAPKMIIQVAEVGRNFTVACQSRSNAEIICCTTPSLQQLNLPPPFKTKAFFVFDGVQSANFDLIYVHNPVFKLFEKPVMISMGNKHVLEIKGDHIDSEAVKGEVLKVGNKSCENVLLNLESVFCTVPRDLLKVNTELNIEWQQAVSSTILGKVIVLPDQNFTGLIAGVASISVLLLLFLGLFLWMKKKKQIKDLGSELVRYDPRVHTPHLDRLVSARSISPTAEMVSNESVDYRATFPEDQFPNSSQNGSCRQAHYPLADLSPILSSGDSNPSSPLLQSNVHIDISALNPDLVQAVQHVVIGPDSLMVHFTEIIGRGHFGCVYHGTLLDNDDKKIHCAVKSLNRITDIEEVSQFLTEGIIMKDFSHPNVLSLLGICLRREGSPLVVLPYMKHGDLRNFIRNESHNPTVKDLIGFGLQVAKGMKYLASKKFVHRDLAARNCMLDEKFTVKVADFGLARDMYDKEYYSVHNKTGAKLPVKWMALESLQTQKFTSKSDVWSFGVLLWELMTRGAPPYPDVNTFDITVYLLQGRRLLQPEYCPDPLFEVMLKCWHPNAEMRPSFSELVSKIAVIFSTFIGEHYVHVNATYVNVKCVAPYPSLLSSQDAPDRVVDT</sequence>
<reference key="1">
    <citation type="submission" date="2006-09" db="EMBL/GenBank/DDBJ databases">
        <title>NISC comparative sequencing initiative.</title>
        <authorList>
            <person name="Antonellis A."/>
            <person name="Ayele K."/>
            <person name="Benjamin B."/>
            <person name="Blakesley R.W."/>
            <person name="Boakye A."/>
            <person name="Bouffard G.G."/>
            <person name="Brinkley C."/>
            <person name="Brooks S."/>
            <person name="Chu G."/>
            <person name="Coleman H."/>
            <person name="Engle J."/>
            <person name="Gestole M."/>
            <person name="Greene A."/>
            <person name="Guan X."/>
            <person name="Gupta J."/>
            <person name="Haghighi P."/>
            <person name="Han J."/>
            <person name="Hansen N."/>
            <person name="Ho S.-L."/>
            <person name="Hu P."/>
            <person name="Hunter G."/>
            <person name="Hurle B."/>
            <person name="Idol J.R."/>
            <person name="Kwong P."/>
            <person name="Laric P."/>
            <person name="Larson S."/>
            <person name="Lee-Lin S.-Q."/>
            <person name="Legaspi R."/>
            <person name="Madden M."/>
            <person name="Maduro Q.L."/>
            <person name="Maduro V.B."/>
            <person name="Margulies E.H."/>
            <person name="Masiello C."/>
            <person name="Maskeri B."/>
            <person name="McDowell J."/>
            <person name="Mojidi H.A."/>
            <person name="Mullikin J.C."/>
            <person name="Oestreicher J.S."/>
            <person name="Park M."/>
            <person name="Portnoy M.E."/>
            <person name="Prasad A."/>
            <person name="Puri O."/>
            <person name="Reddix-Dugue N."/>
            <person name="Schandler K."/>
            <person name="Schueler M.G."/>
            <person name="Sison C."/>
            <person name="Stantripop S."/>
            <person name="Stephen E."/>
            <person name="Taye A."/>
            <person name="Thomas J.W."/>
            <person name="Thomas P.J."/>
            <person name="Tsipouri V."/>
            <person name="Ung L."/>
            <person name="Vogt J.L."/>
            <person name="Wetherby K.D."/>
            <person name="Young A."/>
            <person name="Green E.D."/>
        </authorList>
    </citation>
    <scope>NUCLEOTIDE SEQUENCE [LARGE SCALE GENOMIC DNA]</scope>
</reference>
<comment type="function">
    <text evidence="1">Receptor tyrosine kinase that transduces signals from the extracellular matrix into the cytoplasm by binding to hepatocyte growth factor/HGF ligand. Regulates many physiological processes including proliferation, scattering, morphogenesis and survival. Ligand binding at the cell surface induces autophosphorylation of MET on its intracellular domain that provides docking sites for downstream signaling molecules. Following activation by ligand, interacts with the PI3-kinase subunit PIK3R1, PLCG1, SRC, GRB2, STAT3 or the adapter GAB1. Recruitment of these downstream effectors by MET leads to the activation of several signaling cascades including the RAS-ERK, PI3 kinase-AKT, or PLCgamma-PKC. The RAS-ERK activation is associated with the morphogenetic effects while PI3K/AKT coordinates prosurvival effects. During embryonic development, MET signaling plays a role in gastrulation, development and migration of muscles and neuronal precursors, angiogenesis and kidney formation. In adults, participates in wound healing as well as organ regeneration and tissue remodeling. Also promotes differentiation and proliferation of hematopoietic cells (By similarity).</text>
</comment>
<comment type="catalytic activity">
    <reaction evidence="7">
        <text>L-tyrosyl-[protein] + ATP = O-phospho-L-tyrosyl-[protein] + ADP + H(+)</text>
        <dbReference type="Rhea" id="RHEA:10596"/>
        <dbReference type="Rhea" id="RHEA-COMP:10136"/>
        <dbReference type="Rhea" id="RHEA-COMP:20101"/>
        <dbReference type="ChEBI" id="CHEBI:15378"/>
        <dbReference type="ChEBI" id="CHEBI:30616"/>
        <dbReference type="ChEBI" id="CHEBI:46858"/>
        <dbReference type="ChEBI" id="CHEBI:61978"/>
        <dbReference type="ChEBI" id="CHEBI:456216"/>
        <dbReference type="EC" id="2.7.10.1"/>
    </reaction>
</comment>
<comment type="activity regulation">
    <text evidence="1">In its inactive state, the C-terminal tail interacts with the catalytic domain and inhibits the kinase activity. Upon ligand binding, the C-terminal tail is displaced and becomes phosphorylated, thus increasing the kinase activity (By similarity).</text>
</comment>
<comment type="subunit">
    <text evidence="2 3">Heterodimer made of an alpha chain (50 kDa) and a beta chain (145 kDa) which are disulfide linked. Binds PLXNB1. Interacts when phosphorylated with downstream effectors including STAT3, PIK3R1, SRC, PCLG1, GRB2 and GAB1. Interacts with SPSB1, SPSB2 and SPSB4. Interacts with INPP5D/SHIP1. When phosphorylated at Tyr-1357, interacts with INPPL1/SHIP2. Interacts with RANBP9 and RANBP10, as well as SPSB1, SPSB2, SPSB3 and SPSB4. SPSB1 binding occurs in the presence and in the absence of HGF, however HGF treatment has a positive effect on this interaction. Interacts with MUC20; prevents interaction with GRB2 and suppresses hepatocyte growth factor-induced cell proliferation. Interacts with GRB10. Interacts with PTPN1 and PTPN2. Interacts with HSP90AA1 and HSP90AB1; the interaction suppresses MET kinase activity. Interacts with tensin TNS3 (By similarity). Interacts (when phosphorylated) with tensin TNS4 (via SH2 domain); the interaction increases MET protein stability by inhibiting MET endocytosis and subsequent lysosomal degradation (By similarity).</text>
</comment>
<comment type="subcellular location">
    <subcellularLocation>
        <location evidence="1">Membrane</location>
        <topology evidence="1">Single-pass type I membrane protein</topology>
    </subcellularLocation>
</comment>
<comment type="domain">
    <text evidence="1">The kinase domain is involved in SPSB1 binding.</text>
</comment>
<comment type="domain">
    <text evidence="1">The beta-propeller Sema domain mediates binding to HGF.</text>
</comment>
<comment type="PTM">
    <text evidence="2">Autophosphorylated in response to ligand binding on Tyr-1235 and Tyr-1236 in the kinase domain leading to further phosphorylation of Tyr-1350 and Tyr-1357 in the C-terminal multifunctional docking site. Dephosphorylated by PTPRJ at Tyr-1350 and Tyr-1366. Dephosphorylated by PTPN1 and PTPN2 (By similarity).</text>
</comment>
<comment type="PTM">
    <text evidence="2">Ubiquitinated. Ubiquitination by CBL regulates the receptor stability and activity through proteasomal degradation (By similarity).</text>
</comment>
<comment type="PTM">
    <text evidence="2">O-mannosylation of IPT/TIG domains by TMEM260 is required for protein maturation. O-mannosylated residues are composed of single mannose glycans that are not elongated or modified.</text>
</comment>
<comment type="similarity">
    <text evidence="5">Belongs to the protein kinase superfamily. Tyr protein kinase family.</text>
</comment>
<feature type="signal peptide" evidence="4">
    <location>
        <begin position="1"/>
        <end position="24"/>
    </location>
</feature>
<feature type="chain" id="PRO_0000260428" description="Hepatocyte growth factor receptor">
    <location>
        <begin position="25"/>
        <end position="1382"/>
    </location>
</feature>
<feature type="topological domain" description="Extracellular" evidence="4">
    <location>
        <begin position="25"/>
        <end position="933"/>
    </location>
</feature>
<feature type="transmembrane region" description="Helical" evidence="4">
    <location>
        <begin position="934"/>
        <end position="956"/>
    </location>
</feature>
<feature type="topological domain" description="Cytoplasmic" evidence="4">
    <location>
        <begin position="957"/>
        <end position="1382"/>
    </location>
</feature>
<feature type="domain" description="Sema" evidence="6">
    <location>
        <begin position="27"/>
        <end position="516"/>
    </location>
</feature>
<feature type="domain" description="IPT/TIG 1">
    <location>
        <begin position="564"/>
        <end position="656"/>
    </location>
</feature>
<feature type="domain" description="IPT/TIG 2">
    <location>
        <begin position="658"/>
        <end position="740"/>
    </location>
</feature>
<feature type="domain" description="IPT/TIG 3">
    <location>
        <begin position="743"/>
        <end position="837"/>
    </location>
</feature>
<feature type="domain" description="Protein kinase" evidence="5">
    <location>
        <begin position="1079"/>
        <end position="1346"/>
    </location>
</feature>
<feature type="region of interest" description="Interaction with RANBP9" evidence="1">
    <location>
        <begin position="1213"/>
        <end position="1382"/>
    </location>
</feature>
<feature type="region of interest" description="Interaction with MUC20" evidence="1">
    <location>
        <begin position="1321"/>
        <end position="1360"/>
    </location>
</feature>
<feature type="active site" description="Proton acceptor" evidence="5 7">
    <location>
        <position position="1205"/>
    </location>
</feature>
<feature type="binding site" evidence="5">
    <location>
        <begin position="1085"/>
        <end position="1093"/>
    </location>
    <ligand>
        <name>ATP</name>
        <dbReference type="ChEBI" id="CHEBI:30616"/>
    </ligand>
</feature>
<feature type="binding site" evidence="5">
    <location>
        <position position="1111"/>
    </location>
    <ligand>
        <name>ATP</name>
        <dbReference type="ChEBI" id="CHEBI:30616"/>
    </ligand>
</feature>
<feature type="site" description="Cleavage" evidence="4">
    <location>
        <begin position="308"/>
        <end position="309"/>
    </location>
</feature>
<feature type="modified residue" description="Phosphoserine" evidence="2">
    <location>
        <position position="967"/>
    </location>
</feature>
<feature type="modified residue" description="Phosphothreonine" evidence="2">
    <location>
        <position position="978"/>
    </location>
</feature>
<feature type="modified residue" description="Phosphoserine" evidence="2">
    <location>
        <position position="991"/>
    </location>
</feature>
<feature type="modified residue" description="Phosphoserine" evidence="2">
    <location>
        <position position="998"/>
    </location>
</feature>
<feature type="modified residue" description="Phosphoserine" evidence="2">
    <location>
        <position position="1001"/>
    </location>
</feature>
<feature type="modified residue" description="Phosphotyrosine" evidence="2">
    <location>
        <position position="1004"/>
    </location>
</feature>
<feature type="modified residue" description="Phosphotyrosine" evidence="2">
    <location>
        <position position="1231"/>
    </location>
</feature>
<feature type="modified residue" description="Phosphotyrosine; by autocatalysis" evidence="2">
    <location>
        <position position="1235"/>
    </location>
</feature>
<feature type="modified residue" description="Phosphotyrosine; by autocatalysis" evidence="2">
    <location>
        <position position="1236"/>
    </location>
</feature>
<feature type="modified residue" description="Phosphothreonine" evidence="2">
    <location>
        <position position="1290"/>
    </location>
</feature>
<feature type="modified residue" description="Phosphotyrosine; by autocatalysis" evidence="2">
    <location>
        <position position="1350"/>
    </location>
</feature>
<feature type="modified residue" description="Phosphotyrosine; by autocatalysis" evidence="2">
    <location>
        <position position="1357"/>
    </location>
</feature>
<feature type="modified residue" description="Phosphotyrosine" evidence="2">
    <location>
        <position position="1366"/>
    </location>
</feature>
<feature type="glycosylation site" description="N-linked (GlcNAc...) asparagine" evidence="4">
    <location>
        <position position="38"/>
    </location>
</feature>
<feature type="glycosylation site" description="N-linked (GlcNAc...) asparagine" evidence="4">
    <location>
        <position position="49"/>
    </location>
</feature>
<feature type="glycosylation site" description="N-linked (GlcNAc...) asparagine" evidence="4">
    <location>
        <position position="99"/>
    </location>
</feature>
<feature type="glycosylation site" description="N-linked (GlcNAc...) asparagine" evidence="4">
    <location>
        <position position="203"/>
    </location>
</feature>
<feature type="glycosylation site" description="N-linked (GlcNAc...) asparagine" evidence="4">
    <location>
        <position position="359"/>
    </location>
</feature>
<feature type="glycosylation site" description="N-linked (GlcNAc...) asparagine" evidence="4">
    <location>
        <position position="400"/>
    </location>
</feature>
<feature type="glycosylation site" description="N-linked (GlcNAc...) asparagine" evidence="4">
    <location>
        <position position="406"/>
    </location>
</feature>
<feature type="glycosylation site" description="N-linked (GlcNAc...) asparagine" evidence="4">
    <location>
        <position position="450"/>
    </location>
</feature>
<feature type="glycosylation site" description="N-linked (GlcNAc...) asparagine" evidence="4">
    <location>
        <position position="495"/>
    </location>
</feature>
<feature type="glycosylation site" description="O-linked (Man) threonine" evidence="2">
    <location>
        <position position="583"/>
    </location>
</feature>
<feature type="glycosylation site" description="N-linked (GlcNAc...) asparagine" evidence="4">
    <location>
        <position position="608"/>
    </location>
</feature>
<feature type="glycosylation site" description="N-linked (GlcNAc...) asparagine" evidence="4">
    <location>
        <position position="616"/>
    </location>
</feature>
<feature type="glycosylation site" description="N-linked (GlcNAc...) asparagine" evidence="4">
    <location>
        <position position="636"/>
    </location>
</feature>
<feature type="glycosylation site" description="O-linked (Man) threonine" evidence="2">
    <location>
        <position position="677"/>
    </location>
</feature>
<feature type="glycosylation site" description="O-linked (Man) threonine" evidence="2">
    <location>
        <position position="762"/>
    </location>
</feature>
<feature type="glycosylation site" description="N-linked (GlcNAc...) asparagine" evidence="4">
    <location>
        <position position="769"/>
    </location>
</feature>
<feature type="glycosylation site" description="N-linked (GlcNAc...) asparagine" evidence="4">
    <location>
        <position position="786"/>
    </location>
</feature>
<feature type="glycosylation site" description="N-linked (GlcNAc...) asparagine" evidence="4">
    <location>
        <position position="880"/>
    </location>
</feature>
<feature type="glycosylation site" description="N-linked (GlcNAc...) asparagine" evidence="4">
    <location>
        <position position="931"/>
    </location>
</feature>
<feature type="disulfide bond" evidence="6">
    <location>
        <begin position="94"/>
        <end position="100"/>
    </location>
</feature>
<feature type="disulfide bond" evidence="6">
    <location>
        <begin position="97"/>
        <end position="160"/>
    </location>
</feature>
<feature type="disulfide bond" evidence="6">
    <location>
        <begin position="133"/>
        <end position="141"/>
    </location>
</feature>
<feature type="disulfide bond" evidence="6">
    <location>
        <begin position="173"/>
        <end position="176"/>
    </location>
</feature>
<feature type="disulfide bond" evidence="6">
    <location>
        <begin position="299"/>
        <end position="364"/>
    </location>
</feature>
<feature type="disulfide bond" evidence="6">
    <location>
        <begin position="386"/>
        <end position="398"/>
    </location>
</feature>
<feature type="disulfide bond" evidence="6">
    <location>
        <begin position="521"/>
        <end position="539"/>
    </location>
</feature>
<feature type="disulfide bond" evidence="6">
    <location>
        <begin position="527"/>
        <end position="562"/>
    </location>
</feature>
<feature type="disulfide bond" evidence="6">
    <location>
        <begin position="530"/>
        <end position="546"/>
    </location>
</feature>
<feature type="disulfide bond" evidence="6">
    <location>
        <begin position="542"/>
        <end position="552"/>
    </location>
</feature>
<organism>
    <name type="scientific">Ornithorhynchus anatinus</name>
    <name type="common">Duckbill platypus</name>
    <dbReference type="NCBI Taxonomy" id="9258"/>
    <lineage>
        <taxon>Eukaryota</taxon>
        <taxon>Metazoa</taxon>
        <taxon>Chordata</taxon>
        <taxon>Craniata</taxon>
        <taxon>Vertebrata</taxon>
        <taxon>Euteleostomi</taxon>
        <taxon>Mammalia</taxon>
        <taxon>Monotremata</taxon>
        <taxon>Ornithorhynchidae</taxon>
        <taxon>Ornithorhynchus</taxon>
    </lineage>
</organism>